<accession>B1IRC6</accession>
<feature type="chain" id="PRO_1000083620" description="Protein ApaG">
    <location>
        <begin position="1"/>
        <end position="125"/>
    </location>
</feature>
<feature type="domain" description="ApaG" evidence="1">
    <location>
        <begin position="1"/>
        <end position="125"/>
    </location>
</feature>
<proteinExistence type="inferred from homology"/>
<evidence type="ECO:0000255" key="1">
    <source>
        <dbReference type="HAMAP-Rule" id="MF_00791"/>
    </source>
</evidence>
<dbReference type="EMBL" id="CP000946">
    <property type="protein sequence ID" value="ACA79219.1"/>
    <property type="molecule type" value="Genomic_DNA"/>
</dbReference>
<dbReference type="RefSeq" id="WP_000610901.1">
    <property type="nucleotide sequence ID" value="NZ_MTFT01000035.1"/>
</dbReference>
<dbReference type="SMR" id="B1IRC6"/>
<dbReference type="GeneID" id="93777385"/>
<dbReference type="KEGG" id="ecl:EcolC_3605"/>
<dbReference type="HOGENOM" id="CLU_128074_0_0_6"/>
<dbReference type="GO" id="GO:0070987">
    <property type="term" value="P:error-free translesion synthesis"/>
    <property type="evidence" value="ECO:0007669"/>
    <property type="project" value="TreeGrafter"/>
</dbReference>
<dbReference type="Gene3D" id="2.60.40.1470">
    <property type="entry name" value="ApaG domain"/>
    <property type="match status" value="1"/>
</dbReference>
<dbReference type="HAMAP" id="MF_00791">
    <property type="entry name" value="ApaG"/>
    <property type="match status" value="1"/>
</dbReference>
<dbReference type="InterPro" id="IPR007474">
    <property type="entry name" value="ApaG_domain"/>
</dbReference>
<dbReference type="InterPro" id="IPR036767">
    <property type="entry name" value="ApaG_sf"/>
</dbReference>
<dbReference type="InterPro" id="IPR023065">
    <property type="entry name" value="Uncharacterised_ApaG"/>
</dbReference>
<dbReference type="NCBIfam" id="NF003967">
    <property type="entry name" value="PRK05461.1"/>
    <property type="match status" value="1"/>
</dbReference>
<dbReference type="PANTHER" id="PTHR14289">
    <property type="entry name" value="F-BOX ONLY PROTEIN 3"/>
    <property type="match status" value="1"/>
</dbReference>
<dbReference type="PANTHER" id="PTHR14289:SF16">
    <property type="entry name" value="POLYMERASE DELTA-INTERACTING PROTEIN 2"/>
    <property type="match status" value="1"/>
</dbReference>
<dbReference type="Pfam" id="PF04379">
    <property type="entry name" value="DUF525"/>
    <property type="match status" value="1"/>
</dbReference>
<dbReference type="SUPFAM" id="SSF110069">
    <property type="entry name" value="ApaG-like"/>
    <property type="match status" value="1"/>
</dbReference>
<dbReference type="PROSITE" id="PS51087">
    <property type="entry name" value="APAG"/>
    <property type="match status" value="1"/>
</dbReference>
<name>APAG_ECOLC</name>
<protein>
    <recommendedName>
        <fullName evidence="1">Protein ApaG</fullName>
    </recommendedName>
</protein>
<sequence length="125" mass="13867">MINSPRVCIQVQSVYIEAQSSPDNERYVFAYTVTIRNLGRAPVQLLGRYWLITNGNGRETEVQGEGVVGVQPLIAPGEEYQYTSGAIIETPLGTMQGHYEMIDENGVPFSIDIPVFRLAVPTLIH</sequence>
<gene>
    <name evidence="1" type="primary">apaG</name>
    <name type="ordered locus">EcolC_3605</name>
</gene>
<reference key="1">
    <citation type="submission" date="2008-02" db="EMBL/GenBank/DDBJ databases">
        <title>Complete sequence of Escherichia coli C str. ATCC 8739.</title>
        <authorList>
            <person name="Copeland A."/>
            <person name="Lucas S."/>
            <person name="Lapidus A."/>
            <person name="Glavina del Rio T."/>
            <person name="Dalin E."/>
            <person name="Tice H."/>
            <person name="Bruce D."/>
            <person name="Goodwin L."/>
            <person name="Pitluck S."/>
            <person name="Kiss H."/>
            <person name="Brettin T."/>
            <person name="Detter J.C."/>
            <person name="Han C."/>
            <person name="Kuske C.R."/>
            <person name="Schmutz J."/>
            <person name="Larimer F."/>
            <person name="Land M."/>
            <person name="Hauser L."/>
            <person name="Kyrpides N."/>
            <person name="Mikhailova N."/>
            <person name="Ingram L."/>
            <person name="Richardson P."/>
        </authorList>
    </citation>
    <scope>NUCLEOTIDE SEQUENCE [LARGE SCALE GENOMIC DNA]</scope>
    <source>
        <strain>ATCC 8739 / DSM 1576 / NBRC 3972 / NCIMB 8545 / WDCM 00012 / Crooks</strain>
    </source>
</reference>
<organism>
    <name type="scientific">Escherichia coli (strain ATCC 8739 / DSM 1576 / NBRC 3972 / NCIMB 8545 / WDCM 00012 / Crooks)</name>
    <dbReference type="NCBI Taxonomy" id="481805"/>
    <lineage>
        <taxon>Bacteria</taxon>
        <taxon>Pseudomonadati</taxon>
        <taxon>Pseudomonadota</taxon>
        <taxon>Gammaproteobacteria</taxon>
        <taxon>Enterobacterales</taxon>
        <taxon>Enterobacteriaceae</taxon>
        <taxon>Escherichia</taxon>
    </lineage>
</organism>